<evidence type="ECO:0000255" key="1">
    <source>
        <dbReference type="HAMAP-Rule" id="MF_01151"/>
    </source>
</evidence>
<evidence type="ECO:0000256" key="2">
    <source>
        <dbReference type="SAM" id="MobiDB-lite"/>
    </source>
</evidence>
<organism>
    <name type="scientific">Bacillus cereus (strain B4264)</name>
    <dbReference type="NCBI Taxonomy" id="405532"/>
    <lineage>
        <taxon>Bacteria</taxon>
        <taxon>Bacillati</taxon>
        <taxon>Bacillota</taxon>
        <taxon>Bacilli</taxon>
        <taxon>Bacillales</taxon>
        <taxon>Bacillaceae</taxon>
        <taxon>Bacillus</taxon>
        <taxon>Bacillus cereus group</taxon>
    </lineage>
</organism>
<sequence length="188" mass="21644">MEERNEQVVEEVKEAQVEEAVTPENSEETVEEKSEAALLQEKVDELQAKLTETEGRTLRLQADFENYKRRVQMDKQAAEKYRAQSLVSDILPALDNFERAMQVEATDEQTKSLLQGMEMVHRQLLEALTKEGVEVIEAVGKQFDPNEHQAIMQVEDSEFESNAVVEEFQKGYKLKDRVIRPSMVKVNQ</sequence>
<name>GRPE_BACC4</name>
<reference key="1">
    <citation type="submission" date="2008-10" db="EMBL/GenBank/DDBJ databases">
        <title>Genome sequence of Bacillus cereus B4264.</title>
        <authorList>
            <person name="Dodson R.J."/>
            <person name="Durkin A.S."/>
            <person name="Rosovitz M.J."/>
            <person name="Rasko D.A."/>
            <person name="Hoffmaster A."/>
            <person name="Ravel J."/>
            <person name="Sutton G."/>
        </authorList>
    </citation>
    <scope>NUCLEOTIDE SEQUENCE [LARGE SCALE GENOMIC DNA]</scope>
    <source>
        <strain>B4264</strain>
    </source>
</reference>
<protein>
    <recommendedName>
        <fullName evidence="1">Protein GrpE</fullName>
    </recommendedName>
    <alternativeName>
        <fullName evidence="1">HSP-70 cofactor</fullName>
    </alternativeName>
</protein>
<feature type="chain" id="PRO_1000137540" description="Protein GrpE">
    <location>
        <begin position="1"/>
        <end position="188"/>
    </location>
</feature>
<feature type="region of interest" description="Disordered" evidence="2">
    <location>
        <begin position="1"/>
        <end position="31"/>
    </location>
</feature>
<feature type="compositionally biased region" description="Basic and acidic residues" evidence="2">
    <location>
        <begin position="1"/>
        <end position="16"/>
    </location>
</feature>
<comment type="function">
    <text evidence="1">Participates actively in the response to hyperosmotic and heat shock by preventing the aggregation of stress-denatured proteins, in association with DnaK and GrpE. It is the nucleotide exchange factor for DnaK and may function as a thermosensor. Unfolded proteins bind initially to DnaJ; upon interaction with the DnaJ-bound protein, DnaK hydrolyzes its bound ATP, resulting in the formation of a stable complex. GrpE releases ADP from DnaK; ATP binding to DnaK triggers the release of the substrate protein, thus completing the reaction cycle. Several rounds of ATP-dependent interactions between DnaJ, DnaK and GrpE are required for fully efficient folding.</text>
</comment>
<comment type="subunit">
    <text evidence="1">Homodimer.</text>
</comment>
<comment type="subcellular location">
    <subcellularLocation>
        <location evidence="1">Cytoplasm</location>
    </subcellularLocation>
</comment>
<comment type="similarity">
    <text evidence="1">Belongs to the GrpE family.</text>
</comment>
<dbReference type="EMBL" id="CP001176">
    <property type="protein sequence ID" value="ACK59723.1"/>
    <property type="molecule type" value="Genomic_DNA"/>
</dbReference>
<dbReference type="RefSeq" id="WP_000392711.1">
    <property type="nucleotide sequence ID" value="NZ_VEHB01000006.1"/>
</dbReference>
<dbReference type="SMR" id="B7HCU1"/>
<dbReference type="GeneID" id="67468614"/>
<dbReference type="KEGG" id="bcb:BCB4264_A4434"/>
<dbReference type="HOGENOM" id="CLU_057217_5_2_9"/>
<dbReference type="Proteomes" id="UP000007096">
    <property type="component" value="Chromosome"/>
</dbReference>
<dbReference type="GO" id="GO:0005737">
    <property type="term" value="C:cytoplasm"/>
    <property type="evidence" value="ECO:0007669"/>
    <property type="project" value="UniProtKB-SubCell"/>
</dbReference>
<dbReference type="GO" id="GO:0000774">
    <property type="term" value="F:adenyl-nucleotide exchange factor activity"/>
    <property type="evidence" value="ECO:0007669"/>
    <property type="project" value="InterPro"/>
</dbReference>
<dbReference type="GO" id="GO:0042803">
    <property type="term" value="F:protein homodimerization activity"/>
    <property type="evidence" value="ECO:0007669"/>
    <property type="project" value="InterPro"/>
</dbReference>
<dbReference type="GO" id="GO:0051087">
    <property type="term" value="F:protein-folding chaperone binding"/>
    <property type="evidence" value="ECO:0007669"/>
    <property type="project" value="InterPro"/>
</dbReference>
<dbReference type="GO" id="GO:0051082">
    <property type="term" value="F:unfolded protein binding"/>
    <property type="evidence" value="ECO:0007669"/>
    <property type="project" value="TreeGrafter"/>
</dbReference>
<dbReference type="GO" id="GO:0006457">
    <property type="term" value="P:protein folding"/>
    <property type="evidence" value="ECO:0007669"/>
    <property type="project" value="InterPro"/>
</dbReference>
<dbReference type="CDD" id="cd00446">
    <property type="entry name" value="GrpE"/>
    <property type="match status" value="1"/>
</dbReference>
<dbReference type="FunFam" id="2.30.22.10:FF:000001">
    <property type="entry name" value="Protein GrpE"/>
    <property type="match status" value="1"/>
</dbReference>
<dbReference type="FunFam" id="3.90.20.20:FF:000002">
    <property type="entry name" value="Protein GrpE"/>
    <property type="match status" value="1"/>
</dbReference>
<dbReference type="Gene3D" id="3.90.20.20">
    <property type="match status" value="1"/>
</dbReference>
<dbReference type="Gene3D" id="2.30.22.10">
    <property type="entry name" value="Head domain of nucleotide exchange factor GrpE"/>
    <property type="match status" value="1"/>
</dbReference>
<dbReference type="HAMAP" id="MF_01151">
    <property type="entry name" value="GrpE"/>
    <property type="match status" value="1"/>
</dbReference>
<dbReference type="InterPro" id="IPR000740">
    <property type="entry name" value="GrpE"/>
</dbReference>
<dbReference type="InterPro" id="IPR013805">
    <property type="entry name" value="GrpE_coiled_coil"/>
</dbReference>
<dbReference type="InterPro" id="IPR009012">
    <property type="entry name" value="GrpE_head"/>
</dbReference>
<dbReference type="NCBIfam" id="NF010738">
    <property type="entry name" value="PRK14140.1"/>
    <property type="match status" value="1"/>
</dbReference>
<dbReference type="PANTHER" id="PTHR21237">
    <property type="entry name" value="GRPE PROTEIN"/>
    <property type="match status" value="1"/>
</dbReference>
<dbReference type="PANTHER" id="PTHR21237:SF23">
    <property type="entry name" value="GRPE PROTEIN HOMOLOG, MITOCHONDRIAL"/>
    <property type="match status" value="1"/>
</dbReference>
<dbReference type="Pfam" id="PF01025">
    <property type="entry name" value="GrpE"/>
    <property type="match status" value="1"/>
</dbReference>
<dbReference type="PRINTS" id="PR00773">
    <property type="entry name" value="GRPEPROTEIN"/>
</dbReference>
<dbReference type="SUPFAM" id="SSF58014">
    <property type="entry name" value="Coiled-coil domain of nucleotide exchange factor GrpE"/>
    <property type="match status" value="1"/>
</dbReference>
<dbReference type="SUPFAM" id="SSF51064">
    <property type="entry name" value="Head domain of nucleotide exchange factor GrpE"/>
    <property type="match status" value="1"/>
</dbReference>
<dbReference type="PROSITE" id="PS01071">
    <property type="entry name" value="GRPE"/>
    <property type="match status" value="1"/>
</dbReference>
<keyword id="KW-0143">Chaperone</keyword>
<keyword id="KW-0963">Cytoplasm</keyword>
<keyword id="KW-0346">Stress response</keyword>
<gene>
    <name evidence="1" type="primary">grpE</name>
    <name type="ordered locus">BCB4264_A4434</name>
</gene>
<accession>B7HCU1</accession>
<proteinExistence type="inferred from homology"/>